<protein>
    <recommendedName>
        <fullName>Probable chromosome-partitioning protein ParB</fullName>
    </recommendedName>
</protein>
<comment type="function">
    <text evidence="1">Involved in chromosome partition. Localize to both poles of the predivisional cell following completion of DNA replication. Binds to the DNA origin of replication (By similarity).</text>
</comment>
<comment type="induction">
    <text evidence="2">In infected human monocytes transcripts are present by day 1 post-infection and last for the 7 days of the experiment. In patients with confirmed synovial Chlamydia infections, 6/8 had transcripts. In infected human Hep-2 cells, transcripts are visible from 11-48 hours post-infection.</text>
</comment>
<comment type="similarity">
    <text evidence="3">Belongs to the ParB family.</text>
</comment>
<reference key="1">
    <citation type="journal article" date="1998" name="Science">
        <title>Genome sequence of an obligate intracellular pathogen of humans: Chlamydia trachomatis.</title>
        <authorList>
            <person name="Stephens R.S."/>
            <person name="Kalman S."/>
            <person name="Lammel C.J."/>
            <person name="Fan J."/>
            <person name="Marathe R."/>
            <person name="Aravind L."/>
            <person name="Mitchell W.P."/>
            <person name="Olinger L."/>
            <person name="Tatusov R.L."/>
            <person name="Zhao Q."/>
            <person name="Koonin E.V."/>
            <person name="Davis R.W."/>
        </authorList>
    </citation>
    <scope>NUCLEOTIDE SEQUENCE [LARGE SCALE GENOMIC DNA]</scope>
    <source>
        <strain>ATCC VR-885 / DSM 19411 / UW-3/Cx</strain>
    </source>
</reference>
<reference key="2">
    <citation type="journal article" date="2001" name="Mol. Microbiol.">
        <title>Expression of Chlamydia trachomatis genes encoding products required for DNA synthesis and cell division during active versus persistent infection.</title>
        <authorList>
            <person name="Gerard H.C."/>
            <person name="Krausse-Opatz B."/>
            <person name="Wang Z."/>
            <person name="Rudy D."/>
            <person name="Rao J.P."/>
            <person name="Zeidler H."/>
            <person name="Schumacher H.R."/>
            <person name="Whittum-Hudson J.A."/>
            <person name="Koehler L."/>
            <person name="Hudson A.P."/>
        </authorList>
    </citation>
    <scope>INDUCTION</scope>
    <source>
        <strain>Serovar K</strain>
    </source>
</reference>
<feature type="chain" id="PRO_0000178679" description="Probable chromosome-partitioning protein ParB">
    <location>
        <begin position="1"/>
        <end position="281"/>
    </location>
</feature>
<keyword id="KW-0159">Chromosome partition</keyword>
<keyword id="KW-0238">DNA-binding</keyword>
<keyword id="KW-1185">Reference proteome</keyword>
<sequence length="281" mass="31524">MSRLPSEDTLLEVNIEDIRVSPFQPRRTFLEEDLKELVLSIKTVGLIHPPVVREIRNGDKVLYYELIAGERRWRALQLAGYKTVPVVLKQVLADDMAAEATLIENIQRVNLNPLEMAEAFRRLIVVFGLTQDKVAKKVGKKRSTVANYLRLFSLPQEVQEKMNSGEISLGHAKVILSLEDENLRQILSQKIISCKLAVREAEMEAKRLVKGKGASLKEDSSSQPSSRLGFCQERLATTFGYPVTVKPQGRRICVSFFVEGEEALEALEKALTTSSSEAILT</sequence>
<gene>
    <name type="primary">parB</name>
    <name type="ordered locus">CT_688</name>
</gene>
<dbReference type="EMBL" id="AE001273">
    <property type="protein sequence ID" value="AAC68283.1"/>
    <property type="molecule type" value="Genomic_DNA"/>
</dbReference>
<dbReference type="PIR" id="D71483">
    <property type="entry name" value="D71483"/>
</dbReference>
<dbReference type="RefSeq" id="NP_220207.1">
    <property type="nucleotide sequence ID" value="NC_000117.1"/>
</dbReference>
<dbReference type="RefSeq" id="WP_009872063.1">
    <property type="nucleotide sequence ID" value="NC_000117.1"/>
</dbReference>
<dbReference type="SMR" id="O84694"/>
<dbReference type="FunCoup" id="O84694">
    <property type="interactions" value="149"/>
</dbReference>
<dbReference type="STRING" id="272561.CT_688"/>
<dbReference type="EnsemblBacteria" id="AAC68283">
    <property type="protein sequence ID" value="AAC68283"/>
    <property type="gene ID" value="CT_688"/>
</dbReference>
<dbReference type="GeneID" id="884477"/>
<dbReference type="KEGG" id="ctr:CT_688"/>
<dbReference type="PATRIC" id="fig|272561.5.peg.757"/>
<dbReference type="HOGENOM" id="CLU_023853_0_0_0"/>
<dbReference type="InParanoid" id="O84694"/>
<dbReference type="OrthoDB" id="9802051at2"/>
<dbReference type="Proteomes" id="UP000000431">
    <property type="component" value="Chromosome"/>
</dbReference>
<dbReference type="GO" id="GO:0005694">
    <property type="term" value="C:chromosome"/>
    <property type="evidence" value="ECO:0000318"/>
    <property type="project" value="GO_Central"/>
</dbReference>
<dbReference type="GO" id="GO:0003677">
    <property type="term" value="F:DNA binding"/>
    <property type="evidence" value="ECO:0007669"/>
    <property type="project" value="UniProtKB-KW"/>
</dbReference>
<dbReference type="GO" id="GO:0007059">
    <property type="term" value="P:chromosome segregation"/>
    <property type="evidence" value="ECO:0000318"/>
    <property type="project" value="GO_Central"/>
</dbReference>
<dbReference type="GO" id="GO:0045881">
    <property type="term" value="P:positive regulation of sporulation resulting in formation of a cellular spore"/>
    <property type="evidence" value="ECO:0000318"/>
    <property type="project" value="GO_Central"/>
</dbReference>
<dbReference type="CDD" id="cd00093">
    <property type="entry name" value="HTH_XRE"/>
    <property type="match status" value="1"/>
</dbReference>
<dbReference type="FunFam" id="1.10.10.2830:FF:000001">
    <property type="entry name" value="Chromosome partitioning protein ParB"/>
    <property type="match status" value="1"/>
</dbReference>
<dbReference type="FunFam" id="3.90.1530.30:FF:000001">
    <property type="entry name" value="Chromosome partitioning protein ParB"/>
    <property type="match status" value="1"/>
</dbReference>
<dbReference type="Gene3D" id="1.10.10.2830">
    <property type="match status" value="1"/>
</dbReference>
<dbReference type="Gene3D" id="3.90.1530.30">
    <property type="match status" value="1"/>
</dbReference>
<dbReference type="InterPro" id="IPR050336">
    <property type="entry name" value="Chromosome_partition/occlusion"/>
</dbReference>
<dbReference type="InterPro" id="IPR001387">
    <property type="entry name" value="Cro/C1-type_HTH"/>
</dbReference>
<dbReference type="InterPro" id="IPR041468">
    <property type="entry name" value="HTH_ParB/Spo0J"/>
</dbReference>
<dbReference type="InterPro" id="IPR004437">
    <property type="entry name" value="ParB/RepB/Spo0J"/>
</dbReference>
<dbReference type="InterPro" id="IPR003115">
    <property type="entry name" value="ParB/Sulfiredoxin_dom"/>
</dbReference>
<dbReference type="InterPro" id="IPR036086">
    <property type="entry name" value="ParB/Sulfiredoxin_sf"/>
</dbReference>
<dbReference type="NCBIfam" id="TIGR00180">
    <property type="entry name" value="parB_part"/>
    <property type="match status" value="1"/>
</dbReference>
<dbReference type="PANTHER" id="PTHR33375">
    <property type="entry name" value="CHROMOSOME-PARTITIONING PROTEIN PARB-RELATED"/>
    <property type="match status" value="1"/>
</dbReference>
<dbReference type="PANTHER" id="PTHR33375:SF1">
    <property type="entry name" value="CHROMOSOME-PARTITIONING PROTEIN PARB-RELATED"/>
    <property type="match status" value="1"/>
</dbReference>
<dbReference type="Pfam" id="PF17762">
    <property type="entry name" value="HTH_ParB"/>
    <property type="match status" value="1"/>
</dbReference>
<dbReference type="Pfam" id="PF02195">
    <property type="entry name" value="ParBc"/>
    <property type="match status" value="1"/>
</dbReference>
<dbReference type="SMART" id="SM00470">
    <property type="entry name" value="ParB"/>
    <property type="match status" value="1"/>
</dbReference>
<dbReference type="SUPFAM" id="SSF110849">
    <property type="entry name" value="ParB/Sulfiredoxin"/>
    <property type="match status" value="1"/>
</dbReference>
<evidence type="ECO:0000250" key="1"/>
<evidence type="ECO:0000269" key="2">
    <source>
    </source>
</evidence>
<evidence type="ECO:0000305" key="3"/>
<name>PARB_CHLTR</name>
<organism>
    <name type="scientific">Chlamydia trachomatis serovar D (strain ATCC VR-885 / DSM 19411 / UW-3/Cx)</name>
    <dbReference type="NCBI Taxonomy" id="272561"/>
    <lineage>
        <taxon>Bacteria</taxon>
        <taxon>Pseudomonadati</taxon>
        <taxon>Chlamydiota</taxon>
        <taxon>Chlamydiia</taxon>
        <taxon>Chlamydiales</taxon>
        <taxon>Chlamydiaceae</taxon>
        <taxon>Chlamydia/Chlamydophila group</taxon>
        <taxon>Chlamydia</taxon>
    </lineage>
</organism>
<proteinExistence type="evidence at transcript level"/>
<accession>O84694</accession>